<proteinExistence type="inferred from homology"/>
<keyword id="KW-0963">Cytoplasm</keyword>
<keyword id="KW-0521">NADP</keyword>
<keyword id="KW-0560">Oxidoreductase</keyword>
<keyword id="KW-0671">Queuosine biosynthesis</keyword>
<keyword id="KW-1185">Reference proteome</keyword>
<evidence type="ECO:0000255" key="1">
    <source>
        <dbReference type="HAMAP-Rule" id="MF_00818"/>
    </source>
</evidence>
<accession>Q3SJI1</accession>
<gene>
    <name evidence="1" type="primary">queF</name>
    <name type="ordered locus">Tbd_1227</name>
</gene>
<feature type="chain" id="PRO_0000247700" description="NADPH-dependent 7-cyano-7-deazaguanine reductase">
    <location>
        <begin position="1"/>
        <end position="139"/>
    </location>
</feature>
<feature type="active site" description="Thioimide intermediate" evidence="1">
    <location>
        <position position="34"/>
    </location>
</feature>
<feature type="active site" description="Proton donor" evidence="1">
    <location>
        <position position="41"/>
    </location>
</feature>
<feature type="binding site" evidence="1">
    <location>
        <begin position="56"/>
        <end position="58"/>
    </location>
    <ligand>
        <name>substrate</name>
    </ligand>
</feature>
<feature type="binding site" evidence="1">
    <location>
        <begin position="75"/>
        <end position="76"/>
    </location>
    <ligand>
        <name>substrate</name>
    </ligand>
</feature>
<dbReference type="EC" id="1.7.1.13" evidence="1"/>
<dbReference type="EMBL" id="CP000116">
    <property type="protein sequence ID" value="AAZ97180.1"/>
    <property type="molecule type" value="Genomic_DNA"/>
</dbReference>
<dbReference type="RefSeq" id="WP_011311739.1">
    <property type="nucleotide sequence ID" value="NC_007404.1"/>
</dbReference>
<dbReference type="SMR" id="Q3SJI1"/>
<dbReference type="STRING" id="292415.Tbd_1227"/>
<dbReference type="KEGG" id="tbd:Tbd_1227"/>
<dbReference type="eggNOG" id="COG0780">
    <property type="taxonomic scope" value="Bacteria"/>
</dbReference>
<dbReference type="HOGENOM" id="CLU_102489_1_0_4"/>
<dbReference type="OrthoDB" id="9789995at2"/>
<dbReference type="UniPathway" id="UPA00392"/>
<dbReference type="Proteomes" id="UP000008291">
    <property type="component" value="Chromosome"/>
</dbReference>
<dbReference type="GO" id="GO:0005737">
    <property type="term" value="C:cytoplasm"/>
    <property type="evidence" value="ECO:0007669"/>
    <property type="project" value="UniProtKB-SubCell"/>
</dbReference>
<dbReference type="GO" id="GO:0033739">
    <property type="term" value="F:preQ1 synthase activity"/>
    <property type="evidence" value="ECO:0007669"/>
    <property type="project" value="UniProtKB-UniRule"/>
</dbReference>
<dbReference type="GO" id="GO:0008616">
    <property type="term" value="P:queuosine biosynthetic process"/>
    <property type="evidence" value="ECO:0007669"/>
    <property type="project" value="UniProtKB-UniRule"/>
</dbReference>
<dbReference type="GO" id="GO:0006400">
    <property type="term" value="P:tRNA modification"/>
    <property type="evidence" value="ECO:0007669"/>
    <property type="project" value="UniProtKB-UniRule"/>
</dbReference>
<dbReference type="Gene3D" id="3.30.1130.10">
    <property type="match status" value="1"/>
</dbReference>
<dbReference type="HAMAP" id="MF_00818">
    <property type="entry name" value="QueF_type1"/>
    <property type="match status" value="1"/>
</dbReference>
<dbReference type="InterPro" id="IPR043133">
    <property type="entry name" value="GTP-CH-I_C/QueF"/>
</dbReference>
<dbReference type="InterPro" id="IPR050084">
    <property type="entry name" value="NADPH_dep_7-cyano-7-deazaG_red"/>
</dbReference>
<dbReference type="InterPro" id="IPR029500">
    <property type="entry name" value="QueF"/>
</dbReference>
<dbReference type="InterPro" id="IPR016856">
    <property type="entry name" value="QueF_type1"/>
</dbReference>
<dbReference type="NCBIfam" id="TIGR03139">
    <property type="entry name" value="QueF-II"/>
    <property type="match status" value="1"/>
</dbReference>
<dbReference type="PANTHER" id="PTHR34354">
    <property type="entry name" value="NADPH-DEPENDENT 7-CYANO-7-DEAZAGUANINE REDUCTASE"/>
    <property type="match status" value="1"/>
</dbReference>
<dbReference type="PANTHER" id="PTHR34354:SF1">
    <property type="entry name" value="NADPH-DEPENDENT 7-CYANO-7-DEAZAGUANINE REDUCTASE"/>
    <property type="match status" value="1"/>
</dbReference>
<dbReference type="Pfam" id="PF14489">
    <property type="entry name" value="QueF"/>
    <property type="match status" value="1"/>
</dbReference>
<dbReference type="PIRSF" id="PIRSF027377">
    <property type="entry name" value="Nitrile_oxidored_QueF"/>
    <property type="match status" value="1"/>
</dbReference>
<dbReference type="SUPFAM" id="SSF55620">
    <property type="entry name" value="Tetrahydrobiopterin biosynthesis enzymes-like"/>
    <property type="match status" value="1"/>
</dbReference>
<sequence>MPSTPSKTLETFPNPKPGRDFHIHMEVPEFTCLCPKTGQPDFATLVLDYIPNQACVELKSLKLYMWSFRDEGHFHEDVTNRILDDLVAATDPRYMRLTAKFYVRGGIFTNVVAEHRKDGWQPAPRVDLTQFEHQSNTRG</sequence>
<organism>
    <name type="scientific">Thiobacillus denitrificans (strain ATCC 25259 / T1)</name>
    <dbReference type="NCBI Taxonomy" id="292415"/>
    <lineage>
        <taxon>Bacteria</taxon>
        <taxon>Pseudomonadati</taxon>
        <taxon>Pseudomonadota</taxon>
        <taxon>Betaproteobacteria</taxon>
        <taxon>Nitrosomonadales</taxon>
        <taxon>Thiobacillaceae</taxon>
        <taxon>Thiobacillus</taxon>
    </lineage>
</organism>
<protein>
    <recommendedName>
        <fullName evidence="1">NADPH-dependent 7-cyano-7-deazaguanine reductase</fullName>
        <ecNumber evidence="1">1.7.1.13</ecNumber>
    </recommendedName>
    <alternativeName>
        <fullName evidence="1">7-cyano-7-carbaguanine reductase</fullName>
    </alternativeName>
    <alternativeName>
        <fullName evidence="1">NADPH-dependent nitrile oxidoreductase</fullName>
    </alternativeName>
    <alternativeName>
        <fullName evidence="1">PreQ(0) reductase</fullName>
    </alternativeName>
</protein>
<name>QUEF_THIDA</name>
<reference key="1">
    <citation type="journal article" date="2006" name="J. Bacteriol.">
        <title>The genome sequence of the obligately chemolithoautotrophic, facultatively anaerobic bacterium Thiobacillus denitrificans.</title>
        <authorList>
            <person name="Beller H.R."/>
            <person name="Chain P.S."/>
            <person name="Letain T.E."/>
            <person name="Chakicherla A."/>
            <person name="Larimer F.W."/>
            <person name="Richardson P.M."/>
            <person name="Coleman M.A."/>
            <person name="Wood A.P."/>
            <person name="Kelly D.P."/>
        </authorList>
    </citation>
    <scope>NUCLEOTIDE SEQUENCE [LARGE SCALE GENOMIC DNA]</scope>
    <source>
        <strain>ATCC 25259 / T1</strain>
    </source>
</reference>
<comment type="function">
    <text evidence="1">Catalyzes the NADPH-dependent reduction of 7-cyano-7-deazaguanine (preQ0) to 7-aminomethyl-7-deazaguanine (preQ1).</text>
</comment>
<comment type="catalytic activity">
    <reaction evidence="1">
        <text>7-aminomethyl-7-carbaguanine + 2 NADP(+) = 7-cyano-7-deazaguanine + 2 NADPH + 3 H(+)</text>
        <dbReference type="Rhea" id="RHEA:13409"/>
        <dbReference type="ChEBI" id="CHEBI:15378"/>
        <dbReference type="ChEBI" id="CHEBI:45075"/>
        <dbReference type="ChEBI" id="CHEBI:57783"/>
        <dbReference type="ChEBI" id="CHEBI:58349"/>
        <dbReference type="ChEBI" id="CHEBI:58703"/>
        <dbReference type="EC" id="1.7.1.13"/>
    </reaction>
</comment>
<comment type="pathway">
    <text evidence="1">tRNA modification; tRNA-queuosine biosynthesis.</text>
</comment>
<comment type="subcellular location">
    <subcellularLocation>
        <location evidence="1">Cytoplasm</location>
    </subcellularLocation>
</comment>
<comment type="similarity">
    <text evidence="1">Belongs to the GTP cyclohydrolase I family. QueF type 1 subfamily.</text>
</comment>